<protein>
    <recommendedName>
        <fullName evidence="1">Ribonuclease HII</fullName>
        <shortName evidence="1">RNase HII</shortName>
        <ecNumber evidence="1">3.1.26.4</ecNumber>
    </recommendedName>
</protein>
<proteinExistence type="inferred from homology"/>
<accession>Q1MKS7</accession>
<keyword id="KW-0963">Cytoplasm</keyword>
<keyword id="KW-0255">Endonuclease</keyword>
<keyword id="KW-0378">Hydrolase</keyword>
<keyword id="KW-0464">Manganese</keyword>
<keyword id="KW-0479">Metal-binding</keyword>
<keyword id="KW-0540">Nuclease</keyword>
<reference key="1">
    <citation type="journal article" date="2006" name="Genome Biol.">
        <title>The genome of Rhizobium leguminosarum has recognizable core and accessory components.</title>
        <authorList>
            <person name="Young J.P.W."/>
            <person name="Crossman L.C."/>
            <person name="Johnston A.W.B."/>
            <person name="Thomson N.R."/>
            <person name="Ghazoui Z.F."/>
            <person name="Hull K.H."/>
            <person name="Wexler M."/>
            <person name="Curson A.R.J."/>
            <person name="Todd J.D."/>
            <person name="Poole P.S."/>
            <person name="Mauchline T.H."/>
            <person name="East A.K."/>
            <person name="Quail M.A."/>
            <person name="Churcher C."/>
            <person name="Arrowsmith C."/>
            <person name="Cherevach I."/>
            <person name="Chillingworth T."/>
            <person name="Clarke K."/>
            <person name="Cronin A."/>
            <person name="Davis P."/>
            <person name="Fraser A."/>
            <person name="Hance Z."/>
            <person name="Hauser H."/>
            <person name="Jagels K."/>
            <person name="Moule S."/>
            <person name="Mungall K."/>
            <person name="Norbertczak H."/>
            <person name="Rabbinowitsch E."/>
            <person name="Sanders M."/>
            <person name="Simmonds M."/>
            <person name="Whitehead S."/>
            <person name="Parkhill J."/>
        </authorList>
    </citation>
    <scope>NUCLEOTIDE SEQUENCE [LARGE SCALE GENOMIC DNA]</scope>
    <source>
        <strain>DSM 114642 / LMG 32736 / 3841</strain>
    </source>
</reference>
<dbReference type="EC" id="3.1.26.4" evidence="1"/>
<dbReference type="EMBL" id="AM236080">
    <property type="protein sequence ID" value="CAK06427.1"/>
    <property type="molecule type" value="Genomic_DNA"/>
</dbReference>
<dbReference type="RefSeq" id="WP_011650671.1">
    <property type="nucleotide sequence ID" value="NC_008380.1"/>
</dbReference>
<dbReference type="SMR" id="Q1MKS7"/>
<dbReference type="EnsemblBacteria" id="CAK06427">
    <property type="protein sequence ID" value="CAK06427"/>
    <property type="gene ID" value="RL0930"/>
</dbReference>
<dbReference type="KEGG" id="rle:RL0930"/>
<dbReference type="eggNOG" id="COG0164">
    <property type="taxonomic scope" value="Bacteria"/>
</dbReference>
<dbReference type="HOGENOM" id="CLU_036532_3_2_5"/>
<dbReference type="Proteomes" id="UP000006575">
    <property type="component" value="Chromosome"/>
</dbReference>
<dbReference type="GO" id="GO:0005737">
    <property type="term" value="C:cytoplasm"/>
    <property type="evidence" value="ECO:0007669"/>
    <property type="project" value="UniProtKB-SubCell"/>
</dbReference>
<dbReference type="GO" id="GO:0032299">
    <property type="term" value="C:ribonuclease H2 complex"/>
    <property type="evidence" value="ECO:0007669"/>
    <property type="project" value="TreeGrafter"/>
</dbReference>
<dbReference type="GO" id="GO:0030145">
    <property type="term" value="F:manganese ion binding"/>
    <property type="evidence" value="ECO:0007669"/>
    <property type="project" value="UniProtKB-UniRule"/>
</dbReference>
<dbReference type="GO" id="GO:0003723">
    <property type="term" value="F:RNA binding"/>
    <property type="evidence" value="ECO:0007669"/>
    <property type="project" value="InterPro"/>
</dbReference>
<dbReference type="GO" id="GO:0004523">
    <property type="term" value="F:RNA-DNA hybrid ribonuclease activity"/>
    <property type="evidence" value="ECO:0007669"/>
    <property type="project" value="UniProtKB-UniRule"/>
</dbReference>
<dbReference type="GO" id="GO:0043137">
    <property type="term" value="P:DNA replication, removal of RNA primer"/>
    <property type="evidence" value="ECO:0007669"/>
    <property type="project" value="TreeGrafter"/>
</dbReference>
<dbReference type="GO" id="GO:0006298">
    <property type="term" value="P:mismatch repair"/>
    <property type="evidence" value="ECO:0007669"/>
    <property type="project" value="TreeGrafter"/>
</dbReference>
<dbReference type="CDD" id="cd07182">
    <property type="entry name" value="RNase_HII_bacteria_HII_like"/>
    <property type="match status" value="1"/>
</dbReference>
<dbReference type="Gene3D" id="3.30.420.10">
    <property type="entry name" value="Ribonuclease H-like superfamily/Ribonuclease H"/>
    <property type="match status" value="1"/>
</dbReference>
<dbReference type="HAMAP" id="MF_00052_B">
    <property type="entry name" value="RNase_HII_B"/>
    <property type="match status" value="1"/>
</dbReference>
<dbReference type="InterPro" id="IPR022898">
    <property type="entry name" value="RNase_HII"/>
</dbReference>
<dbReference type="InterPro" id="IPR001352">
    <property type="entry name" value="RNase_HII/HIII"/>
</dbReference>
<dbReference type="InterPro" id="IPR024567">
    <property type="entry name" value="RNase_HII/HIII_dom"/>
</dbReference>
<dbReference type="InterPro" id="IPR012337">
    <property type="entry name" value="RNaseH-like_sf"/>
</dbReference>
<dbReference type="InterPro" id="IPR036397">
    <property type="entry name" value="RNaseH_sf"/>
</dbReference>
<dbReference type="NCBIfam" id="NF000595">
    <property type="entry name" value="PRK00015.1-3"/>
    <property type="match status" value="1"/>
</dbReference>
<dbReference type="PANTHER" id="PTHR10954">
    <property type="entry name" value="RIBONUCLEASE H2 SUBUNIT A"/>
    <property type="match status" value="1"/>
</dbReference>
<dbReference type="PANTHER" id="PTHR10954:SF18">
    <property type="entry name" value="RIBONUCLEASE HII"/>
    <property type="match status" value="1"/>
</dbReference>
<dbReference type="Pfam" id="PF01351">
    <property type="entry name" value="RNase_HII"/>
    <property type="match status" value="1"/>
</dbReference>
<dbReference type="SUPFAM" id="SSF53098">
    <property type="entry name" value="Ribonuclease H-like"/>
    <property type="match status" value="1"/>
</dbReference>
<dbReference type="PROSITE" id="PS51975">
    <property type="entry name" value="RNASE_H_2"/>
    <property type="match status" value="1"/>
</dbReference>
<gene>
    <name evidence="1" type="primary">rnhB</name>
    <name type="ordered locus">RL0930</name>
</gene>
<feature type="chain" id="PRO_1000031188" description="Ribonuclease HII">
    <location>
        <begin position="1"/>
        <end position="229"/>
    </location>
</feature>
<feature type="domain" description="RNase H type-2" evidence="2">
    <location>
        <begin position="34"/>
        <end position="223"/>
    </location>
</feature>
<feature type="region of interest" description="Disordered" evidence="3">
    <location>
        <begin position="209"/>
        <end position="229"/>
    </location>
</feature>
<feature type="binding site" evidence="1">
    <location>
        <position position="40"/>
    </location>
    <ligand>
        <name>a divalent metal cation</name>
        <dbReference type="ChEBI" id="CHEBI:60240"/>
    </ligand>
</feature>
<feature type="binding site" evidence="1">
    <location>
        <position position="41"/>
    </location>
    <ligand>
        <name>a divalent metal cation</name>
        <dbReference type="ChEBI" id="CHEBI:60240"/>
    </ligand>
</feature>
<feature type="binding site" evidence="1">
    <location>
        <position position="131"/>
    </location>
    <ligand>
        <name>a divalent metal cation</name>
        <dbReference type="ChEBI" id="CHEBI:60240"/>
    </ligand>
</feature>
<name>RNH2_RHIJ3</name>
<comment type="function">
    <text evidence="1">Endonuclease that specifically degrades the RNA of RNA-DNA hybrids.</text>
</comment>
<comment type="catalytic activity">
    <reaction evidence="1">
        <text>Endonucleolytic cleavage to 5'-phosphomonoester.</text>
        <dbReference type="EC" id="3.1.26.4"/>
    </reaction>
</comment>
<comment type="cofactor">
    <cofactor evidence="1">
        <name>Mn(2+)</name>
        <dbReference type="ChEBI" id="CHEBI:29035"/>
    </cofactor>
    <cofactor evidence="1">
        <name>Mg(2+)</name>
        <dbReference type="ChEBI" id="CHEBI:18420"/>
    </cofactor>
    <text evidence="1">Manganese or magnesium. Binds 1 divalent metal ion per monomer in the absence of substrate. May bind a second metal ion after substrate binding.</text>
</comment>
<comment type="subcellular location">
    <subcellularLocation>
        <location evidence="1">Cytoplasm</location>
    </subcellularLocation>
</comment>
<comment type="similarity">
    <text evidence="1">Belongs to the RNase HII family.</text>
</comment>
<sequence>MKPRTPPDSPLLFDTAPLVPDFRLELKARKAGHWPVAGADEAGRGPLAGPVVAAAVILDPKRIPEGLNDSKQLSAQRREELFVQILATATVSIASSSSTRIDETDIRKASLDAMRRAICSLAIPASYVLTDGLDVPPGLDCPGQAVVKGDARSVSIAAASIVAKVTRDRMMARAHSVFPDYGFAAHVGYGTAQHRAGIERHGPCSLHRMSFRPLRKTENGPETDELLSE</sequence>
<evidence type="ECO:0000255" key="1">
    <source>
        <dbReference type="HAMAP-Rule" id="MF_00052"/>
    </source>
</evidence>
<evidence type="ECO:0000255" key="2">
    <source>
        <dbReference type="PROSITE-ProRule" id="PRU01319"/>
    </source>
</evidence>
<evidence type="ECO:0000256" key="3">
    <source>
        <dbReference type="SAM" id="MobiDB-lite"/>
    </source>
</evidence>
<organism>
    <name type="scientific">Rhizobium johnstonii (strain DSM 114642 / LMG 32736 / 3841)</name>
    <name type="common">Rhizobium leguminosarum bv. viciae</name>
    <dbReference type="NCBI Taxonomy" id="216596"/>
    <lineage>
        <taxon>Bacteria</taxon>
        <taxon>Pseudomonadati</taxon>
        <taxon>Pseudomonadota</taxon>
        <taxon>Alphaproteobacteria</taxon>
        <taxon>Hyphomicrobiales</taxon>
        <taxon>Rhizobiaceae</taxon>
        <taxon>Rhizobium/Agrobacterium group</taxon>
        <taxon>Rhizobium</taxon>
        <taxon>Rhizobium johnstonii</taxon>
    </lineage>
</organism>